<name>ALX_ECO57</name>
<organism>
    <name type="scientific">Escherichia coli O157:H7</name>
    <dbReference type="NCBI Taxonomy" id="83334"/>
    <lineage>
        <taxon>Bacteria</taxon>
        <taxon>Pseudomonadati</taxon>
        <taxon>Pseudomonadota</taxon>
        <taxon>Gammaproteobacteria</taxon>
        <taxon>Enterobacterales</taxon>
        <taxon>Enterobacteriaceae</taxon>
        <taxon>Escherichia</taxon>
    </lineage>
</organism>
<evidence type="ECO:0000250" key="1">
    <source>
        <dbReference type="UniProtKB" id="P42601"/>
    </source>
</evidence>
<evidence type="ECO:0000255" key="2"/>
<evidence type="ECO:0000305" key="3"/>
<dbReference type="EMBL" id="AE005174">
    <property type="protein sequence ID" value="AAG58221.1"/>
    <property type="molecule type" value="Genomic_DNA"/>
</dbReference>
<dbReference type="EMBL" id="BA000007">
    <property type="protein sequence ID" value="BAB37393.1"/>
    <property type="molecule type" value="Genomic_DNA"/>
</dbReference>
<dbReference type="PIR" id="A85970">
    <property type="entry name" value="A85970"/>
</dbReference>
<dbReference type="PIR" id="B91125">
    <property type="entry name" value="B91125"/>
</dbReference>
<dbReference type="RefSeq" id="NP_311997.1">
    <property type="nucleotide sequence ID" value="NC_002695.1"/>
</dbReference>
<dbReference type="RefSeq" id="WP_001098809.1">
    <property type="nucleotide sequence ID" value="NZ_VOAI01000009.1"/>
</dbReference>
<dbReference type="STRING" id="155864.Z4441"/>
<dbReference type="GeneID" id="916186"/>
<dbReference type="KEGG" id="ece:Z4441"/>
<dbReference type="KEGG" id="ecs:ECs_3970"/>
<dbReference type="PATRIC" id="fig|386585.9.peg.4144"/>
<dbReference type="eggNOG" id="COG0861">
    <property type="taxonomic scope" value="Bacteria"/>
</dbReference>
<dbReference type="HOGENOM" id="CLU_045644_1_2_6"/>
<dbReference type="OMA" id="ADHAREY"/>
<dbReference type="Proteomes" id="UP000000558">
    <property type="component" value="Chromosome"/>
</dbReference>
<dbReference type="Proteomes" id="UP000002519">
    <property type="component" value="Chromosome"/>
</dbReference>
<dbReference type="GO" id="GO:0005886">
    <property type="term" value="C:plasma membrane"/>
    <property type="evidence" value="ECO:0007669"/>
    <property type="project" value="UniProtKB-SubCell"/>
</dbReference>
<dbReference type="InterPro" id="IPR005496">
    <property type="entry name" value="Integral_membrane_TerC"/>
</dbReference>
<dbReference type="InterPro" id="IPR022369">
    <property type="entry name" value="Integral_membrane_TerC_rswitch"/>
</dbReference>
<dbReference type="NCBIfam" id="TIGR03718">
    <property type="entry name" value="R_switched_Alx"/>
    <property type="match status" value="1"/>
</dbReference>
<dbReference type="PANTHER" id="PTHR30238">
    <property type="entry name" value="MEMBRANE BOUND PREDICTED REDOX MODULATOR"/>
    <property type="match status" value="1"/>
</dbReference>
<dbReference type="PANTHER" id="PTHR30238:SF0">
    <property type="entry name" value="THYLAKOID MEMBRANE PROTEIN TERC, CHLOROPLASTIC"/>
    <property type="match status" value="1"/>
</dbReference>
<dbReference type="Pfam" id="PF03741">
    <property type="entry name" value="TerC"/>
    <property type="match status" value="1"/>
</dbReference>
<accession>Q8XAJ0</accession>
<gene>
    <name type="primary">alx</name>
    <name type="ordered locus">Z4441</name>
    <name type="ordered locus">ECs3970</name>
</gene>
<comment type="function">
    <text evidence="1">Has been proposed to be a redox modulator.</text>
</comment>
<comment type="subcellular location">
    <subcellularLocation>
        <location evidence="1">Cell inner membrane</location>
        <topology evidence="3">Multi-pass membrane protein</topology>
    </subcellularLocation>
</comment>
<comment type="similarity">
    <text evidence="3">Belongs to the TerC family.</text>
</comment>
<proteinExistence type="inferred from homology"/>
<protein>
    <recommendedName>
        <fullName>Putative membrane-bound redox modulator Alx</fullName>
    </recommendedName>
</protein>
<keyword id="KW-0997">Cell inner membrane</keyword>
<keyword id="KW-1003">Cell membrane</keyword>
<keyword id="KW-0472">Membrane</keyword>
<keyword id="KW-1185">Reference proteome</keyword>
<keyword id="KW-0812">Transmembrane</keyword>
<keyword id="KW-1133">Transmembrane helix</keyword>
<reference key="1">
    <citation type="journal article" date="2001" name="Nature">
        <title>Genome sequence of enterohaemorrhagic Escherichia coli O157:H7.</title>
        <authorList>
            <person name="Perna N.T."/>
            <person name="Plunkett G. III"/>
            <person name="Burland V."/>
            <person name="Mau B."/>
            <person name="Glasner J.D."/>
            <person name="Rose D.J."/>
            <person name="Mayhew G.F."/>
            <person name="Evans P.S."/>
            <person name="Gregor J."/>
            <person name="Kirkpatrick H.A."/>
            <person name="Posfai G."/>
            <person name="Hackett J."/>
            <person name="Klink S."/>
            <person name="Boutin A."/>
            <person name="Shao Y."/>
            <person name="Miller L."/>
            <person name="Grotbeck E.J."/>
            <person name="Davis N.W."/>
            <person name="Lim A."/>
            <person name="Dimalanta E.T."/>
            <person name="Potamousis K."/>
            <person name="Apodaca J."/>
            <person name="Anantharaman T.S."/>
            <person name="Lin J."/>
            <person name="Yen G."/>
            <person name="Schwartz D.C."/>
            <person name="Welch R.A."/>
            <person name="Blattner F.R."/>
        </authorList>
    </citation>
    <scope>NUCLEOTIDE SEQUENCE [LARGE SCALE GENOMIC DNA]</scope>
    <source>
        <strain>O157:H7 / EDL933 / ATCC 700927 / EHEC</strain>
    </source>
</reference>
<reference key="2">
    <citation type="journal article" date="2001" name="DNA Res.">
        <title>Complete genome sequence of enterohemorrhagic Escherichia coli O157:H7 and genomic comparison with a laboratory strain K-12.</title>
        <authorList>
            <person name="Hayashi T."/>
            <person name="Makino K."/>
            <person name="Ohnishi M."/>
            <person name="Kurokawa K."/>
            <person name="Ishii K."/>
            <person name="Yokoyama K."/>
            <person name="Han C.-G."/>
            <person name="Ohtsubo E."/>
            <person name="Nakayama K."/>
            <person name="Murata T."/>
            <person name="Tanaka M."/>
            <person name="Tobe T."/>
            <person name="Iida T."/>
            <person name="Takami H."/>
            <person name="Honda T."/>
            <person name="Sasakawa C."/>
            <person name="Ogasawara N."/>
            <person name="Yasunaga T."/>
            <person name="Kuhara S."/>
            <person name="Shiba T."/>
            <person name="Hattori M."/>
            <person name="Shinagawa H."/>
        </authorList>
    </citation>
    <scope>NUCLEOTIDE SEQUENCE [LARGE SCALE GENOMIC DNA]</scope>
    <source>
        <strain>O157:H7 / Sakai / RIMD 0509952 / EHEC</strain>
    </source>
</reference>
<feature type="chain" id="PRO_0000103412" description="Putative membrane-bound redox modulator Alx">
    <location>
        <begin position="1"/>
        <end position="321"/>
    </location>
</feature>
<feature type="topological domain" description="Periplasmic" evidence="2">
    <location>
        <begin position="1"/>
        <end position="6"/>
    </location>
</feature>
<feature type="transmembrane region" description="Helical" evidence="2">
    <location>
        <begin position="7"/>
        <end position="27"/>
    </location>
</feature>
<feature type="topological domain" description="Cytoplasmic" evidence="2">
    <location>
        <begin position="28"/>
        <end position="43"/>
    </location>
</feature>
<feature type="transmembrane region" description="Helical" evidence="2">
    <location>
        <begin position="44"/>
        <end position="64"/>
    </location>
</feature>
<feature type="topological domain" description="Periplasmic" evidence="2">
    <location>
        <begin position="65"/>
        <end position="89"/>
    </location>
</feature>
<feature type="transmembrane region" description="Helical" evidence="2">
    <location>
        <begin position="90"/>
        <end position="110"/>
    </location>
</feature>
<feature type="topological domain" description="Cytoplasmic" evidence="2">
    <location>
        <begin position="111"/>
        <end position="113"/>
    </location>
</feature>
<feature type="transmembrane region" description="Helical" evidence="2">
    <location>
        <begin position="114"/>
        <end position="134"/>
    </location>
</feature>
<feature type="topological domain" description="Periplasmic" evidence="2">
    <location>
        <position position="135"/>
    </location>
</feature>
<feature type="transmembrane region" description="Helical" evidence="2">
    <location>
        <begin position="136"/>
        <end position="156"/>
    </location>
</feature>
<feature type="topological domain" description="Cytoplasmic" evidence="2">
    <location>
        <begin position="157"/>
        <end position="198"/>
    </location>
</feature>
<feature type="transmembrane region" description="Helical" evidence="2">
    <location>
        <begin position="199"/>
        <end position="219"/>
    </location>
</feature>
<feature type="topological domain" description="Periplasmic" evidence="2">
    <location>
        <begin position="220"/>
        <end position="225"/>
    </location>
</feature>
<feature type="transmembrane region" description="Helical" evidence="2">
    <location>
        <begin position="226"/>
        <end position="246"/>
    </location>
</feature>
<feature type="topological domain" description="Cytoplasmic" evidence="2">
    <location>
        <begin position="247"/>
        <end position="261"/>
    </location>
</feature>
<feature type="transmembrane region" description="Helical" evidence="2">
    <location>
        <begin position="262"/>
        <end position="282"/>
    </location>
</feature>
<feature type="topological domain" description="Periplasmic" evidence="2">
    <location>
        <begin position="283"/>
        <end position="286"/>
    </location>
</feature>
<feature type="transmembrane region" description="Helical" evidence="2">
    <location>
        <begin position="287"/>
        <end position="307"/>
    </location>
</feature>
<feature type="topological domain" description="Cytoplasmic" evidence="2">
    <location>
        <begin position="308"/>
        <end position="321"/>
    </location>
</feature>
<sequence>MNTVGTPLLWGGFAVVVAIMLAIDLLLQGRRGAHAMTMKQAAAWSLVWVTLSLLFNAAFWWYLVQTEGRAVADPQALAFLTGYLIEKSLAVDNVFVWLMLFSYFSVPAALQRRVLVYGVLGAIVLRTIMIFTGSWLISQFDWILYIFGAFLLFTGVKMALAHEDESGIGDKPLVRWLRGHLRMTDTIDNEHFFVRKNGLLYATPLMLVLILVELSDVIFAVDSIPAIFAVTTDPFIVLTSNLFAILGLRAMYFLLAGVAERFSMLKYGLAVILVFIGIKMLIVDFYHIPIAVSLGVVFGILVMTFIINAWVNYRHDKQRVG</sequence>